<sequence length="286" mass="31294">MSIISTKYLLQDAQANGYAVPAFNIHNAETIQAILEVCSEMRSPVILAGTPGTFKHIALEEIYALCSAYSTTYNMPLALHLDHHESLDDIRRKVHAGVRSAMIDGSHFPFAENVKLVKSVVDFCHSQDCSVEAELGRLGGVEDDMSVDAESAFLTDPQEAKRFVELTGVDSLAVAIGTAHGLYSKTPKIDFQRLAEIREVVDVPLVLHGASDVPDEFVRRTIELGVTKVNVATELKIAFAGAVKAWFAENPQGNDPRYYMRVGMDAMKEVVRNKINVCGSANRISA</sequence>
<keyword id="KW-0002">3D-structure</keyword>
<keyword id="KW-0456">Lyase</keyword>
<keyword id="KW-0479">Metal-binding</keyword>
<keyword id="KW-1185">Reference proteome</keyword>
<keyword id="KW-0862">Zinc</keyword>
<reference key="1">
    <citation type="journal article" date="1997" name="Science">
        <title>The complete genome sequence of Escherichia coli K-12.</title>
        <authorList>
            <person name="Blattner F.R."/>
            <person name="Plunkett G. III"/>
            <person name="Bloch C.A."/>
            <person name="Perna N.T."/>
            <person name="Burland V."/>
            <person name="Riley M."/>
            <person name="Collado-Vides J."/>
            <person name="Glasner J.D."/>
            <person name="Rode C.K."/>
            <person name="Mayhew G.F."/>
            <person name="Gregor J."/>
            <person name="Davis N.W."/>
            <person name="Kirkpatrick H.A."/>
            <person name="Goeden M.A."/>
            <person name="Rose D.J."/>
            <person name="Mau B."/>
            <person name="Shao Y."/>
        </authorList>
    </citation>
    <scope>NUCLEOTIDE SEQUENCE [LARGE SCALE GENOMIC DNA]</scope>
    <source>
        <strain>K12 / MG1655 / ATCC 47076</strain>
    </source>
</reference>
<reference key="2">
    <citation type="journal article" date="2006" name="Mol. Syst. Biol.">
        <title>Highly accurate genome sequences of Escherichia coli K-12 strains MG1655 and W3110.</title>
        <authorList>
            <person name="Hayashi K."/>
            <person name="Morooka N."/>
            <person name="Yamamoto Y."/>
            <person name="Fujita K."/>
            <person name="Isono K."/>
            <person name="Choi S."/>
            <person name="Ohtsubo E."/>
            <person name="Baba T."/>
            <person name="Wanner B.L."/>
            <person name="Mori H."/>
            <person name="Horiuchi T."/>
        </authorList>
    </citation>
    <scope>NUCLEOTIDE SEQUENCE [LARGE SCALE GENOMIC DNA]</scope>
    <source>
        <strain>K12 / W3110 / ATCC 27325 / DSM 5911</strain>
    </source>
</reference>
<reference key="3">
    <citation type="journal article" date="1996" name="Microbiology">
        <title>Novel phosphotransferase genes revealed by bacterial genome sequencing: a gene cluster encoding a putative N-acetylgalactosamine metabolic pathway in Escherichia coli.</title>
        <authorList>
            <person name="Reizer J."/>
            <person name="Ramseier T.M."/>
            <person name="Reizer A."/>
            <person name="Charbit A."/>
            <person name="Saier M.H. Jr."/>
        </authorList>
    </citation>
    <scope>DISCUSSION OF SEQUENCE</scope>
</reference>
<reference key="4">
    <citation type="journal article" date="2000" name="Eur. J. Biochem.">
        <title>Exploring substrate binding and discrimination in fructose 1,6-bisphosphate and tagatose 1,6-bisphosphate aldolases.</title>
        <authorList>
            <person name="Zgiby S.M."/>
            <person name="Thomson G.J."/>
            <person name="Qamar S."/>
            <person name="Berry A."/>
        </authorList>
    </citation>
    <scope>FUNCTION</scope>
    <scope>CATALYTIC ACTIVITY</scope>
    <scope>SUBSTRATE SPECIFICITY</scope>
    <scope>KINETIC PARAMETERS</scope>
    <scope>MASS SPECTROMETRY</scope>
    <scope>SUBUNIT</scope>
    <source>
        <strain>K12 / MG1655 / ATCC 47076</strain>
    </source>
</reference>
<reference key="5">
    <citation type="journal article" date="2002" name="Arch. Microbiol.">
        <title>Two class II D-tagatose-bisphosphate aldolases from enteric bacteria.</title>
        <authorList>
            <person name="Brinkkoetter A."/>
            <person name="Shakeri-Garakani A."/>
            <person name="Lengeler J.W."/>
        </authorList>
    </citation>
    <scope>FUNCTION</scope>
    <scope>COMPLEX WITH KBAZ</scope>
    <source>
        <strain>K12</strain>
    </source>
</reference>
<reference key="6">
    <citation type="journal article" date="2002" name="J. Biol. Chem.">
        <title>Structure of tagatose-1,6-bisphosphate aldolase. Insight into chiral discrimination, mechanism, and specificity of class II aldolases.</title>
        <authorList>
            <person name="Hall D.R."/>
            <person name="Bond C.S."/>
            <person name="Leonard G.A."/>
            <person name="Watt C.I."/>
            <person name="Berry A."/>
            <person name="Hunter W.N."/>
        </authorList>
    </citation>
    <scope>X-RAY CRYSTALLOGRAPHY (1.45 ANGSTROMS) IN COMPLEX WITH ZINC AND TRANSITION STATE ANALOG</scope>
    <scope>ACTIVE SITE</scope>
</reference>
<name>KBAY_ECOLI</name>
<gene>
    <name type="primary">kbaY</name>
    <name type="synonym">agaY</name>
    <name type="synonym">kba</name>
    <name type="synonym">yraC</name>
    <name type="ordered locus">b3137</name>
    <name type="ordered locus">JW3106</name>
</gene>
<dbReference type="EC" id="4.1.2.40"/>
<dbReference type="EMBL" id="U18997">
    <property type="protein sequence ID" value="AAA57940.1"/>
    <property type="molecule type" value="Genomic_DNA"/>
</dbReference>
<dbReference type="EMBL" id="U00096">
    <property type="protein sequence ID" value="AAC76171.1"/>
    <property type="molecule type" value="Genomic_DNA"/>
</dbReference>
<dbReference type="EMBL" id="AP009048">
    <property type="protein sequence ID" value="BAE77183.1"/>
    <property type="molecule type" value="Genomic_DNA"/>
</dbReference>
<dbReference type="PIR" id="E65103">
    <property type="entry name" value="E65103"/>
</dbReference>
<dbReference type="RefSeq" id="NP_417606.1">
    <property type="nucleotide sequence ID" value="NC_000913.3"/>
</dbReference>
<dbReference type="RefSeq" id="WP_000022766.1">
    <property type="nucleotide sequence ID" value="NZ_STEB01000001.1"/>
</dbReference>
<dbReference type="PDB" id="1GVF">
    <property type="method" value="X-ray"/>
    <property type="resolution" value="1.45 A"/>
    <property type="chains" value="A/B=1-286"/>
</dbReference>
<dbReference type="PDBsum" id="1GVF"/>
<dbReference type="SMR" id="P0AB74"/>
<dbReference type="BioGRID" id="4261155">
    <property type="interactions" value="29"/>
</dbReference>
<dbReference type="BioGRID" id="851957">
    <property type="interactions" value="1"/>
</dbReference>
<dbReference type="ComplexPortal" id="CPX-6022">
    <property type="entry name" value="KbaYZ tagatose-1,6-bisphosphate aldolase complex"/>
</dbReference>
<dbReference type="DIP" id="DIP-47961N"/>
<dbReference type="FunCoup" id="P0AB74">
    <property type="interactions" value="610"/>
</dbReference>
<dbReference type="IntAct" id="P0AB74">
    <property type="interactions" value="7"/>
</dbReference>
<dbReference type="STRING" id="511145.b3137"/>
<dbReference type="DrugBank" id="DB03026">
    <property type="generic name" value="Phosphoglycolohydroxamic Acid"/>
</dbReference>
<dbReference type="PaxDb" id="511145-b3137"/>
<dbReference type="EnsemblBacteria" id="AAC76171">
    <property type="protein sequence ID" value="AAC76171"/>
    <property type="gene ID" value="b3137"/>
</dbReference>
<dbReference type="GeneID" id="75203745"/>
<dbReference type="GeneID" id="947644"/>
<dbReference type="KEGG" id="ecj:JW3106"/>
<dbReference type="KEGG" id="eco:b3137"/>
<dbReference type="KEGG" id="ecoc:C3026_17095"/>
<dbReference type="PATRIC" id="fig|1411691.4.peg.3593"/>
<dbReference type="EchoBASE" id="EB2621"/>
<dbReference type="eggNOG" id="COG0191">
    <property type="taxonomic scope" value="Bacteria"/>
</dbReference>
<dbReference type="HOGENOM" id="CLU_040088_0_1_6"/>
<dbReference type="InParanoid" id="P0AB74"/>
<dbReference type="OMA" id="PRTWGKL"/>
<dbReference type="OrthoDB" id="9803995at2"/>
<dbReference type="PhylomeDB" id="P0AB74"/>
<dbReference type="BioCyc" id="EcoCyc:TAGAALDOL1-MONOMER"/>
<dbReference type="BioCyc" id="MetaCyc:TAGAALDOL1-MONOMER"/>
<dbReference type="BRENDA" id="4.1.2.40">
    <property type="organism ID" value="2026"/>
</dbReference>
<dbReference type="SABIO-RK" id="P0AB74"/>
<dbReference type="UniPathway" id="UPA00704">
    <property type="reaction ID" value="UER00716"/>
</dbReference>
<dbReference type="EvolutionaryTrace" id="P0AB74"/>
<dbReference type="PRO" id="PR:P0AB74"/>
<dbReference type="Proteomes" id="UP000000625">
    <property type="component" value="Chromosome"/>
</dbReference>
<dbReference type="GO" id="GO:1902494">
    <property type="term" value="C:catalytic complex"/>
    <property type="evidence" value="ECO:0000303"/>
    <property type="project" value="ComplexPortal"/>
</dbReference>
<dbReference type="GO" id="GO:0005829">
    <property type="term" value="C:cytosol"/>
    <property type="evidence" value="ECO:0000314"/>
    <property type="project" value="EcoCyc"/>
</dbReference>
<dbReference type="GO" id="GO:0032991">
    <property type="term" value="C:protein-containing complex"/>
    <property type="evidence" value="ECO:0000314"/>
    <property type="project" value="EcoCyc"/>
</dbReference>
<dbReference type="GO" id="GO:0042802">
    <property type="term" value="F:identical protein binding"/>
    <property type="evidence" value="ECO:0000314"/>
    <property type="project" value="EcoCyc"/>
</dbReference>
<dbReference type="GO" id="GO:0009025">
    <property type="term" value="F:tagatose-bisphosphate aldolase activity"/>
    <property type="evidence" value="ECO:0000314"/>
    <property type="project" value="EcoCyc"/>
</dbReference>
<dbReference type="GO" id="GO:0008270">
    <property type="term" value="F:zinc ion binding"/>
    <property type="evidence" value="ECO:0000314"/>
    <property type="project" value="EcoCyc"/>
</dbReference>
<dbReference type="GO" id="GO:0005975">
    <property type="term" value="P:carbohydrate metabolic process"/>
    <property type="evidence" value="ECO:0007669"/>
    <property type="project" value="InterPro"/>
</dbReference>
<dbReference type="GO" id="GO:2001059">
    <property type="term" value="P:D-tagatose 6-phosphate catabolic process"/>
    <property type="evidence" value="ECO:0000303"/>
    <property type="project" value="ComplexPortal"/>
</dbReference>
<dbReference type="GO" id="GO:0051289">
    <property type="term" value="P:protein homotetramerization"/>
    <property type="evidence" value="ECO:0000314"/>
    <property type="project" value="EcoCyc"/>
</dbReference>
<dbReference type="CDD" id="cd00453">
    <property type="entry name" value="FTBP_aldolase_II"/>
    <property type="match status" value="1"/>
</dbReference>
<dbReference type="FunFam" id="3.20.20.70:FF:000043">
    <property type="entry name" value="D-tagatose-1,6-bisphosphate aldolase subunit GatY"/>
    <property type="match status" value="1"/>
</dbReference>
<dbReference type="Gene3D" id="3.20.20.70">
    <property type="entry name" value="Aldolase class I"/>
    <property type="match status" value="1"/>
</dbReference>
<dbReference type="HAMAP" id="MF_01293">
    <property type="entry name" value="TagBP_aldolase_KbaY"/>
    <property type="match status" value="1"/>
</dbReference>
<dbReference type="InterPro" id="IPR013785">
    <property type="entry name" value="Aldolase_TIM"/>
</dbReference>
<dbReference type="InterPro" id="IPR050246">
    <property type="entry name" value="Class_II_FBP_aldolase"/>
</dbReference>
<dbReference type="InterPro" id="IPR000771">
    <property type="entry name" value="FBA_II"/>
</dbReference>
<dbReference type="InterPro" id="IPR023788">
    <property type="entry name" value="TagBP_ald_KbaY"/>
</dbReference>
<dbReference type="InterPro" id="IPR011288">
    <property type="entry name" value="TagBP_ald_KbaY/GatY"/>
</dbReference>
<dbReference type="NCBIfam" id="TIGR00167">
    <property type="entry name" value="cbbA"/>
    <property type="match status" value="1"/>
</dbReference>
<dbReference type="NCBIfam" id="NF006626">
    <property type="entry name" value="PRK09195.1"/>
    <property type="match status" value="1"/>
</dbReference>
<dbReference type="NCBIfam" id="NF009374">
    <property type="entry name" value="PRK12737.1"/>
    <property type="match status" value="1"/>
</dbReference>
<dbReference type="NCBIfam" id="NF009375">
    <property type="entry name" value="PRK12738.1"/>
    <property type="match status" value="1"/>
</dbReference>
<dbReference type="NCBIfam" id="TIGR01858">
    <property type="entry name" value="tag_bisphos_ald"/>
    <property type="match status" value="1"/>
</dbReference>
<dbReference type="PANTHER" id="PTHR30304">
    <property type="entry name" value="D-TAGATOSE-1,6-BISPHOSPHATE ALDOLASE"/>
    <property type="match status" value="1"/>
</dbReference>
<dbReference type="PANTHER" id="PTHR30304:SF0">
    <property type="entry name" value="D-TAGATOSE-1,6-BISPHOSPHATE ALDOLASE SUBUNIT GATY-RELATED"/>
    <property type="match status" value="1"/>
</dbReference>
<dbReference type="Pfam" id="PF01116">
    <property type="entry name" value="F_bP_aldolase"/>
    <property type="match status" value="1"/>
</dbReference>
<dbReference type="PIRSF" id="PIRSF001359">
    <property type="entry name" value="F_bP_aldolase_II"/>
    <property type="match status" value="1"/>
</dbReference>
<dbReference type="SUPFAM" id="SSF51569">
    <property type="entry name" value="Aldolase"/>
    <property type="match status" value="1"/>
</dbReference>
<dbReference type="PROSITE" id="PS00602">
    <property type="entry name" value="ALDOLASE_CLASS_II_1"/>
    <property type="match status" value="1"/>
</dbReference>
<dbReference type="PROSITE" id="PS00806">
    <property type="entry name" value="ALDOLASE_CLASS_II_2"/>
    <property type="match status" value="1"/>
</dbReference>
<protein>
    <recommendedName>
        <fullName>D-tagatose-1,6-bisphosphate aldolase subunit KbaY</fullName>
        <shortName>TBPA</shortName>
        <shortName>TagBP aldolase</shortName>
        <ecNumber>4.1.2.40</ecNumber>
    </recommendedName>
    <alternativeName>
        <fullName>D-tagatose-bisphosphate aldolase class II</fullName>
    </alternativeName>
    <alternativeName>
        <fullName>Ketose 1,6-bisphosphate aldolase class II</fullName>
    </alternativeName>
    <alternativeName>
        <fullName>Tagatose-bisphosphate aldolase</fullName>
    </alternativeName>
</protein>
<evidence type="ECO:0000269" key="1">
    <source>
    </source>
</evidence>
<evidence type="ECO:0000269" key="2">
    <source>
    </source>
</evidence>
<evidence type="ECO:0000269" key="3">
    <source>
    </source>
</evidence>
<evidence type="ECO:0000305" key="4"/>
<evidence type="ECO:0007829" key="5">
    <source>
        <dbReference type="PDB" id="1GVF"/>
    </source>
</evidence>
<accession>P0AB74</accession>
<accession>P42908</accession>
<accession>Q2M973</accession>
<proteinExistence type="evidence at protein level"/>
<comment type="function">
    <text evidence="1 3">Catalytic subunit of the tagatose-1,6-bisphosphate aldolase KbaYZ, which catalyzes the reversible aldol condensation of dihydroxyacetone phosphate (DHAP or glycerone-phosphate) with glyceraldehyde 3-phosphate (G3P) to produce tagatose 1,6-bisphosphate (TBP). Requires KbaZ subunit for full activity and stability.</text>
</comment>
<comment type="catalytic activity">
    <reaction evidence="1">
        <text>D-tagatofuranose 1,6-bisphosphate = D-glyceraldehyde 3-phosphate + dihydroxyacetone phosphate</text>
        <dbReference type="Rhea" id="RHEA:22948"/>
        <dbReference type="ChEBI" id="CHEBI:57642"/>
        <dbReference type="ChEBI" id="CHEBI:58694"/>
        <dbReference type="ChEBI" id="CHEBI:59776"/>
        <dbReference type="EC" id="4.1.2.40"/>
    </reaction>
</comment>
<comment type="cofactor">
    <cofactor>
        <name>Zn(2+)</name>
        <dbReference type="ChEBI" id="CHEBI:29105"/>
    </cofactor>
    <text>Binds 1 zinc ion per subunit.</text>
</comment>
<comment type="biophysicochemical properties">
    <kinetics>
        <KM evidence="1">0.26 mM for tagatose-1,6-bisphosphate</KM>
        <KM evidence="1">1.3 mM for fructose-1,6-bisphosphate</KM>
        <text>The catalytic efficiency measured with tagatose-1,6-bisphosphate as substrate is 340-fold higher than that with fructose-1,6-bisphosphate.</text>
    </kinetics>
</comment>
<comment type="pathway">
    <text>Carbohydrate metabolism; D-tagatose 6-phosphate degradation; D-glyceraldehyde 3-phosphate and glycerone phosphate from D-tagatose 6-phosphate: step 2/2.</text>
</comment>
<comment type="subunit">
    <text evidence="1 2">Homotetramer. Forms a complex with KbaZ.</text>
</comment>
<comment type="interaction">
    <interactant intactId="EBI-543669">
        <id>P0AB74</id>
    </interactant>
    <interactant intactId="EBI-543702">
        <id>P0A7K2</id>
        <label>rplL</label>
    </interactant>
    <organismsDiffer>false</organismsDiffer>
    <experiments>2</experiments>
</comment>
<comment type="mass spectrometry" mass="31165.9" error="2.95" method="Electrospray" evidence="1"/>
<comment type="miscellaneous">
    <text>In contrast to E.coli strains C and EC3132, K-12 strains cannot grow on N-acetylgalactosamine and D-galactosamine, because they carry a deletion and thus lack active PTS systems specific for these compounds. Therefore, KbaYZ in K-12 strains is not involved in the degradation of these compounds.</text>
</comment>
<comment type="similarity">
    <text evidence="4">Belongs to the class II fructose-bisphosphate aldolase family. TagBP aldolase KbaY subfamily.</text>
</comment>
<organism>
    <name type="scientific">Escherichia coli (strain K12)</name>
    <dbReference type="NCBI Taxonomy" id="83333"/>
    <lineage>
        <taxon>Bacteria</taxon>
        <taxon>Pseudomonadati</taxon>
        <taxon>Pseudomonadota</taxon>
        <taxon>Gammaproteobacteria</taxon>
        <taxon>Enterobacterales</taxon>
        <taxon>Enterobacteriaceae</taxon>
        <taxon>Escherichia</taxon>
    </lineage>
</organism>
<feature type="chain" id="PRO_0000178763" description="D-tagatose-1,6-bisphosphate aldolase subunit KbaY">
    <location>
        <begin position="1"/>
        <end position="286"/>
    </location>
</feature>
<feature type="active site" description="Proton donor" evidence="2">
    <location>
        <position position="82"/>
    </location>
</feature>
<feature type="binding site" evidence="2">
    <location>
        <position position="83"/>
    </location>
    <ligand>
        <name>Zn(2+)</name>
        <dbReference type="ChEBI" id="CHEBI:29105"/>
        <note>catalytic</note>
    </ligand>
</feature>
<feature type="binding site" evidence="2">
    <location>
        <position position="180"/>
    </location>
    <ligand>
        <name>Zn(2+)</name>
        <dbReference type="ChEBI" id="CHEBI:29105"/>
        <note>catalytic</note>
    </ligand>
</feature>
<feature type="binding site">
    <location>
        <position position="181"/>
    </location>
    <ligand>
        <name>dihydroxyacetone phosphate</name>
        <dbReference type="ChEBI" id="CHEBI:57642"/>
    </ligand>
</feature>
<feature type="binding site" evidence="2">
    <location>
        <position position="208"/>
    </location>
    <ligand>
        <name>Zn(2+)</name>
        <dbReference type="ChEBI" id="CHEBI:29105"/>
        <note>catalytic</note>
    </ligand>
</feature>
<feature type="binding site">
    <location>
        <begin position="209"/>
        <end position="211"/>
    </location>
    <ligand>
        <name>dihydroxyacetone phosphate</name>
        <dbReference type="ChEBI" id="CHEBI:57642"/>
    </ligand>
</feature>
<feature type="binding site">
    <location>
        <begin position="230"/>
        <end position="233"/>
    </location>
    <ligand>
        <name>dihydroxyacetone phosphate</name>
        <dbReference type="ChEBI" id="CHEBI:57642"/>
    </ligand>
</feature>
<feature type="helix" evidence="5">
    <location>
        <begin position="7"/>
        <end position="16"/>
    </location>
</feature>
<feature type="strand" evidence="5">
    <location>
        <begin position="20"/>
        <end position="24"/>
    </location>
</feature>
<feature type="helix" evidence="5">
    <location>
        <begin position="28"/>
        <end position="41"/>
    </location>
</feature>
<feature type="strand" evidence="5">
    <location>
        <begin position="46"/>
        <end position="49"/>
    </location>
</feature>
<feature type="helix" evidence="5">
    <location>
        <begin position="53"/>
        <end position="56"/>
    </location>
</feature>
<feature type="helix" evidence="5">
    <location>
        <begin position="59"/>
        <end position="72"/>
    </location>
</feature>
<feature type="strand" evidence="5">
    <location>
        <begin position="77"/>
        <end position="84"/>
    </location>
</feature>
<feature type="helix" evidence="5">
    <location>
        <begin position="87"/>
        <end position="95"/>
    </location>
</feature>
<feature type="strand" evidence="5">
    <location>
        <begin position="100"/>
        <end position="103"/>
    </location>
</feature>
<feature type="helix" evidence="5">
    <location>
        <begin position="110"/>
        <end position="126"/>
    </location>
</feature>
<feature type="strand" evidence="5">
    <location>
        <begin position="130"/>
        <end position="136"/>
    </location>
</feature>
<feature type="helix" evidence="5">
    <location>
        <begin position="157"/>
        <end position="167"/>
    </location>
</feature>
<feature type="strand" evidence="5">
    <location>
        <begin position="170"/>
        <end position="174"/>
    </location>
</feature>
<feature type="helix" evidence="5">
    <location>
        <begin position="191"/>
        <end position="200"/>
    </location>
</feature>
<feature type="strand" evidence="5">
    <location>
        <begin position="205"/>
        <end position="207"/>
    </location>
</feature>
<feature type="helix" evidence="5">
    <location>
        <begin position="215"/>
        <end position="223"/>
    </location>
</feature>
<feature type="strand" evidence="5">
    <location>
        <begin position="226"/>
        <end position="231"/>
    </location>
</feature>
<feature type="helix" evidence="5">
    <location>
        <begin position="233"/>
        <end position="249"/>
    </location>
</feature>
<feature type="helix" evidence="5">
    <location>
        <begin position="256"/>
        <end position="278"/>
    </location>
</feature>